<proteinExistence type="inferred from homology"/>
<name>SYL_DESPS</name>
<accession>Q6AJZ7</accession>
<evidence type="ECO:0000255" key="1">
    <source>
        <dbReference type="HAMAP-Rule" id="MF_00049"/>
    </source>
</evidence>
<dbReference type="EC" id="6.1.1.4" evidence="1"/>
<dbReference type="EMBL" id="CR522870">
    <property type="protein sequence ID" value="CAG37329.1"/>
    <property type="molecule type" value="Genomic_DNA"/>
</dbReference>
<dbReference type="RefSeq" id="WP_011189841.1">
    <property type="nucleotide sequence ID" value="NC_006138.1"/>
</dbReference>
<dbReference type="SMR" id="Q6AJZ7"/>
<dbReference type="STRING" id="177439.DP2600"/>
<dbReference type="KEGG" id="dps:DP2600"/>
<dbReference type="eggNOG" id="COG0495">
    <property type="taxonomic scope" value="Bacteria"/>
</dbReference>
<dbReference type="HOGENOM" id="CLU_004427_0_0_7"/>
<dbReference type="OrthoDB" id="9810365at2"/>
<dbReference type="Proteomes" id="UP000000602">
    <property type="component" value="Chromosome"/>
</dbReference>
<dbReference type="GO" id="GO:0005829">
    <property type="term" value="C:cytosol"/>
    <property type="evidence" value="ECO:0007669"/>
    <property type="project" value="TreeGrafter"/>
</dbReference>
<dbReference type="GO" id="GO:0002161">
    <property type="term" value="F:aminoacyl-tRNA deacylase activity"/>
    <property type="evidence" value="ECO:0007669"/>
    <property type="project" value="InterPro"/>
</dbReference>
<dbReference type="GO" id="GO:0005524">
    <property type="term" value="F:ATP binding"/>
    <property type="evidence" value="ECO:0007669"/>
    <property type="project" value="UniProtKB-UniRule"/>
</dbReference>
<dbReference type="GO" id="GO:0004823">
    <property type="term" value="F:leucine-tRNA ligase activity"/>
    <property type="evidence" value="ECO:0007669"/>
    <property type="project" value="UniProtKB-UniRule"/>
</dbReference>
<dbReference type="GO" id="GO:0006429">
    <property type="term" value="P:leucyl-tRNA aminoacylation"/>
    <property type="evidence" value="ECO:0007669"/>
    <property type="project" value="UniProtKB-UniRule"/>
</dbReference>
<dbReference type="CDD" id="cd07958">
    <property type="entry name" value="Anticodon_Ia_Leu_BEm"/>
    <property type="match status" value="1"/>
</dbReference>
<dbReference type="CDD" id="cd00812">
    <property type="entry name" value="LeuRS_core"/>
    <property type="match status" value="1"/>
</dbReference>
<dbReference type="FunFam" id="3.40.50.620:FF:000003">
    <property type="entry name" value="Leucine--tRNA ligase"/>
    <property type="match status" value="1"/>
</dbReference>
<dbReference type="FunFam" id="3.40.50.620:FF:000056">
    <property type="entry name" value="Leucine--tRNA ligase"/>
    <property type="match status" value="1"/>
</dbReference>
<dbReference type="FunFam" id="1.10.730.10:FF:000011">
    <property type="entry name" value="Leucine--tRNA ligase chloroplastic/mitochondrial"/>
    <property type="match status" value="1"/>
</dbReference>
<dbReference type="Gene3D" id="3.10.20.590">
    <property type="match status" value="1"/>
</dbReference>
<dbReference type="Gene3D" id="3.40.50.620">
    <property type="entry name" value="HUPs"/>
    <property type="match status" value="2"/>
</dbReference>
<dbReference type="Gene3D" id="1.10.730.10">
    <property type="entry name" value="Isoleucyl-tRNA Synthetase, Domain 1"/>
    <property type="match status" value="1"/>
</dbReference>
<dbReference type="HAMAP" id="MF_00049_B">
    <property type="entry name" value="Leu_tRNA_synth_B"/>
    <property type="match status" value="1"/>
</dbReference>
<dbReference type="InterPro" id="IPR001412">
    <property type="entry name" value="aa-tRNA-synth_I_CS"/>
</dbReference>
<dbReference type="InterPro" id="IPR002302">
    <property type="entry name" value="Leu-tRNA-ligase"/>
</dbReference>
<dbReference type="InterPro" id="IPR025709">
    <property type="entry name" value="Leu_tRNA-synth_edit"/>
</dbReference>
<dbReference type="InterPro" id="IPR013155">
    <property type="entry name" value="M/V/L/I-tRNA-synth_anticd-bd"/>
</dbReference>
<dbReference type="InterPro" id="IPR015413">
    <property type="entry name" value="Methionyl/Leucyl_tRNA_Synth"/>
</dbReference>
<dbReference type="InterPro" id="IPR014729">
    <property type="entry name" value="Rossmann-like_a/b/a_fold"/>
</dbReference>
<dbReference type="InterPro" id="IPR009080">
    <property type="entry name" value="tRNAsynth_Ia_anticodon-bd"/>
</dbReference>
<dbReference type="InterPro" id="IPR009008">
    <property type="entry name" value="Val/Leu/Ile-tRNA-synth_edit"/>
</dbReference>
<dbReference type="NCBIfam" id="TIGR00396">
    <property type="entry name" value="leuS_bact"/>
    <property type="match status" value="1"/>
</dbReference>
<dbReference type="PANTHER" id="PTHR43740:SF2">
    <property type="entry name" value="LEUCINE--TRNA LIGASE, MITOCHONDRIAL"/>
    <property type="match status" value="1"/>
</dbReference>
<dbReference type="PANTHER" id="PTHR43740">
    <property type="entry name" value="LEUCYL-TRNA SYNTHETASE"/>
    <property type="match status" value="1"/>
</dbReference>
<dbReference type="Pfam" id="PF08264">
    <property type="entry name" value="Anticodon_1"/>
    <property type="match status" value="1"/>
</dbReference>
<dbReference type="Pfam" id="PF13603">
    <property type="entry name" value="tRNA-synt_1_2"/>
    <property type="match status" value="1"/>
</dbReference>
<dbReference type="Pfam" id="PF09334">
    <property type="entry name" value="tRNA-synt_1g"/>
    <property type="match status" value="2"/>
</dbReference>
<dbReference type="PRINTS" id="PR00985">
    <property type="entry name" value="TRNASYNTHLEU"/>
</dbReference>
<dbReference type="SUPFAM" id="SSF47323">
    <property type="entry name" value="Anticodon-binding domain of a subclass of class I aminoacyl-tRNA synthetases"/>
    <property type="match status" value="1"/>
</dbReference>
<dbReference type="SUPFAM" id="SSF52374">
    <property type="entry name" value="Nucleotidylyl transferase"/>
    <property type="match status" value="1"/>
</dbReference>
<dbReference type="SUPFAM" id="SSF50677">
    <property type="entry name" value="ValRS/IleRS/LeuRS editing domain"/>
    <property type="match status" value="1"/>
</dbReference>
<dbReference type="PROSITE" id="PS00178">
    <property type="entry name" value="AA_TRNA_LIGASE_I"/>
    <property type="match status" value="1"/>
</dbReference>
<keyword id="KW-0030">Aminoacyl-tRNA synthetase</keyword>
<keyword id="KW-0067">ATP-binding</keyword>
<keyword id="KW-0963">Cytoplasm</keyword>
<keyword id="KW-0436">Ligase</keyword>
<keyword id="KW-0547">Nucleotide-binding</keyword>
<keyword id="KW-0648">Protein biosynthesis</keyword>
<keyword id="KW-1185">Reference proteome</keyword>
<reference key="1">
    <citation type="journal article" date="2004" name="Environ. Microbiol.">
        <title>The genome of Desulfotalea psychrophila, a sulfate-reducing bacterium from permanently cold Arctic sediments.</title>
        <authorList>
            <person name="Rabus R."/>
            <person name="Ruepp A."/>
            <person name="Frickey T."/>
            <person name="Rattei T."/>
            <person name="Fartmann B."/>
            <person name="Stark M."/>
            <person name="Bauer M."/>
            <person name="Zibat A."/>
            <person name="Lombardot T."/>
            <person name="Becker I."/>
            <person name="Amann J."/>
            <person name="Gellner K."/>
            <person name="Teeling H."/>
            <person name="Leuschner W.D."/>
            <person name="Gloeckner F.-O."/>
            <person name="Lupas A.N."/>
            <person name="Amann R."/>
            <person name="Klenk H.-P."/>
        </authorList>
    </citation>
    <scope>NUCLEOTIDE SEQUENCE [LARGE SCALE GENOMIC DNA]</scope>
    <source>
        <strain>DSM 12343 / LSv54</strain>
    </source>
</reference>
<gene>
    <name evidence="1" type="primary">leuS</name>
    <name type="ordered locus">DP2600</name>
</gene>
<sequence length="827" mass="94774">MQHPTNARYDFKTIESKWQKNWAENKTYSVTEDEDKEKYYLLEMFPYPSGRIHMGHVRNYTIGDVVARYKRMRGFNVLHPMGWDAFGLPAENAAQKNNTHPSVWTYDNIDYMRQQLQQLGLSYDWDREMATCNPKYYRQEQQLFIEMLEKGLIYEKVTTVNWCDTCQTVLANEQVIEGACWRCDQLVHPRKMNGWFFKITDYAEELLADLDKLTGWPEKVRTMQRNWIGKSTGLSCDFQLEDMDDKISIFTTRPDTIYGVTFMSLAPEHPLVEQLIAGTDREQEVRDFVKEVLEDKQRQDPTQEPEKKGIFTGKYCTNPFNGDRVPVYVANFVLIEYGTGAVMAVPAHDQRDFEFAGKYKLPIIPVVVPEGEAVNPADMEEALTNHGLLINSGDFTGMASQEAQAKIIAYAEEKGFGSPLTTYRLRDWGISRQRYWGAPIPIIHCDSCGIVPVPIDQLPVELPEDKDKSSVCAPLHQRPDFINTTCPKCGQPAKRETDTMDTFVESSWYFARYTSPRHTEAPLDKAKAKYWLAVDQYIGGVEHAILHLLYSRFFTKVLRDLGYLEIDEPFIKLLTQGMVIKDGTKMSKSKGNVVDPHDLISEFGADTTRLFSLFAAPPERDLEWSSEGVEGSSRFLNRIYRFITANFEALTAGEAFPKKLSEEDRLLHRKNHQTIKRVTENIEHNFHFNTAISAVMELVNQLFAQFKNEKSIAAPAVLRASVDSVLLLLSPMVPHFCNEMWMVLGNTEPIENQAWPEFDIEATKEDLLTIIIQVRGKVRSKIQVPVDIEEDEIVALALADENCQKFIDGQPIKKTIVVKKKLVNIVI</sequence>
<comment type="catalytic activity">
    <reaction evidence="1">
        <text>tRNA(Leu) + L-leucine + ATP = L-leucyl-tRNA(Leu) + AMP + diphosphate</text>
        <dbReference type="Rhea" id="RHEA:11688"/>
        <dbReference type="Rhea" id="RHEA-COMP:9613"/>
        <dbReference type="Rhea" id="RHEA-COMP:9622"/>
        <dbReference type="ChEBI" id="CHEBI:30616"/>
        <dbReference type="ChEBI" id="CHEBI:33019"/>
        <dbReference type="ChEBI" id="CHEBI:57427"/>
        <dbReference type="ChEBI" id="CHEBI:78442"/>
        <dbReference type="ChEBI" id="CHEBI:78494"/>
        <dbReference type="ChEBI" id="CHEBI:456215"/>
        <dbReference type="EC" id="6.1.1.4"/>
    </reaction>
</comment>
<comment type="subcellular location">
    <subcellularLocation>
        <location evidence="1">Cytoplasm</location>
    </subcellularLocation>
</comment>
<comment type="similarity">
    <text evidence="1">Belongs to the class-I aminoacyl-tRNA synthetase family.</text>
</comment>
<feature type="chain" id="PRO_0000152010" description="Leucine--tRNA ligase">
    <location>
        <begin position="1"/>
        <end position="827"/>
    </location>
</feature>
<feature type="short sequence motif" description="'HIGH' region">
    <location>
        <begin position="46"/>
        <end position="56"/>
    </location>
</feature>
<feature type="short sequence motif" description="'KMSKS' region">
    <location>
        <begin position="585"/>
        <end position="589"/>
    </location>
</feature>
<feature type="binding site" evidence="1">
    <location>
        <position position="588"/>
    </location>
    <ligand>
        <name>ATP</name>
        <dbReference type="ChEBI" id="CHEBI:30616"/>
    </ligand>
</feature>
<protein>
    <recommendedName>
        <fullName evidence="1">Leucine--tRNA ligase</fullName>
        <ecNumber evidence="1">6.1.1.4</ecNumber>
    </recommendedName>
    <alternativeName>
        <fullName evidence="1">Leucyl-tRNA synthetase</fullName>
        <shortName evidence="1">LeuRS</shortName>
    </alternativeName>
</protein>
<organism>
    <name type="scientific">Desulfotalea psychrophila (strain LSv54 / DSM 12343)</name>
    <dbReference type="NCBI Taxonomy" id="177439"/>
    <lineage>
        <taxon>Bacteria</taxon>
        <taxon>Pseudomonadati</taxon>
        <taxon>Thermodesulfobacteriota</taxon>
        <taxon>Desulfobulbia</taxon>
        <taxon>Desulfobulbales</taxon>
        <taxon>Desulfocapsaceae</taxon>
        <taxon>Desulfotalea</taxon>
    </lineage>
</organism>